<protein>
    <recommendedName>
        <fullName evidence="1">Large ribosomal subunit protein bL34</fullName>
    </recommendedName>
    <alternativeName>
        <fullName>50S ribosomal protein L34</fullName>
    </alternativeName>
</protein>
<sequence>MKRTYQPSKLKRAKTHGFLARMATASGRKVLKLRRKKQRAQLTVSSER</sequence>
<dbReference type="EMBL" id="U00089">
    <property type="protein sequence ID" value="AAB95808.1"/>
    <property type="molecule type" value="Genomic_DNA"/>
</dbReference>
<dbReference type="PIR" id="S73486">
    <property type="entry name" value="S73486"/>
</dbReference>
<dbReference type="RefSeq" id="NP_110371.1">
    <property type="nucleotide sequence ID" value="NC_000912.1"/>
</dbReference>
<dbReference type="RefSeq" id="WP_010875039.1">
    <property type="nucleotide sequence ID" value="NZ_OU342337.1"/>
</dbReference>
<dbReference type="PDB" id="7OOD">
    <property type="method" value="EM"/>
    <property type="resolution" value="3.40 A"/>
    <property type="chains" value="0=1-48"/>
</dbReference>
<dbReference type="PDB" id="7P6Z">
    <property type="method" value="EM"/>
    <property type="resolution" value="3.50 A"/>
    <property type="chains" value="0=1-48"/>
</dbReference>
<dbReference type="PDB" id="7PAH">
    <property type="method" value="EM"/>
    <property type="resolution" value="9.50 A"/>
    <property type="chains" value="0=1-48"/>
</dbReference>
<dbReference type="PDB" id="7PAI">
    <property type="method" value="EM"/>
    <property type="resolution" value="6.70 A"/>
    <property type="chains" value="0=1-48"/>
</dbReference>
<dbReference type="PDB" id="7PAJ">
    <property type="method" value="EM"/>
    <property type="resolution" value="7.30 A"/>
    <property type="chains" value="0=1-48"/>
</dbReference>
<dbReference type="PDB" id="7PAK">
    <property type="method" value="EM"/>
    <property type="resolution" value="5.30 A"/>
    <property type="chains" value="0=1-48"/>
</dbReference>
<dbReference type="PDB" id="7PAL">
    <property type="method" value="EM"/>
    <property type="resolution" value="4.70 A"/>
    <property type="chains" value="0=1-48"/>
</dbReference>
<dbReference type="PDB" id="7PAM">
    <property type="method" value="EM"/>
    <property type="resolution" value="6.80 A"/>
    <property type="chains" value="0=1-48"/>
</dbReference>
<dbReference type="PDB" id="7PAN">
    <property type="method" value="EM"/>
    <property type="resolution" value="9.70 A"/>
    <property type="chains" value="0=1-48"/>
</dbReference>
<dbReference type="PDB" id="7PAO">
    <property type="method" value="EM"/>
    <property type="resolution" value="7.00 A"/>
    <property type="chains" value="0=1-48"/>
</dbReference>
<dbReference type="PDB" id="7PAQ">
    <property type="method" value="EM"/>
    <property type="resolution" value="8.90 A"/>
    <property type="chains" value="0=1-48"/>
</dbReference>
<dbReference type="PDB" id="7PAR">
    <property type="method" value="EM"/>
    <property type="resolution" value="8.20 A"/>
    <property type="chains" value="0=1-48"/>
</dbReference>
<dbReference type="PDB" id="7PAS">
    <property type="method" value="EM"/>
    <property type="resolution" value="16.00 A"/>
    <property type="chains" value="0=1-48"/>
</dbReference>
<dbReference type="PDB" id="7PAT">
    <property type="method" value="EM"/>
    <property type="resolution" value="9.20 A"/>
    <property type="chains" value="0=1-48"/>
</dbReference>
<dbReference type="PDB" id="7PAU">
    <property type="method" value="EM"/>
    <property type="resolution" value="8.30 A"/>
    <property type="chains" value="0=1-48"/>
</dbReference>
<dbReference type="PDB" id="7PH9">
    <property type="method" value="EM"/>
    <property type="resolution" value="8.70 A"/>
    <property type="chains" value="0=1-48"/>
</dbReference>
<dbReference type="PDB" id="7PHA">
    <property type="method" value="EM"/>
    <property type="resolution" value="8.50 A"/>
    <property type="chains" value="0=1-48"/>
</dbReference>
<dbReference type="PDB" id="7PHB">
    <property type="method" value="EM"/>
    <property type="resolution" value="4.90 A"/>
    <property type="chains" value="0=1-48"/>
</dbReference>
<dbReference type="PDB" id="7PHC">
    <property type="method" value="EM"/>
    <property type="resolution" value="9.90 A"/>
    <property type="chains" value="0=1-48"/>
</dbReference>
<dbReference type="PDB" id="7PI8">
    <property type="method" value="EM"/>
    <property type="resolution" value="8.90 A"/>
    <property type="chains" value="0=1-48"/>
</dbReference>
<dbReference type="PDB" id="7PI9">
    <property type="method" value="EM"/>
    <property type="resolution" value="6.30 A"/>
    <property type="chains" value="0=1-48"/>
</dbReference>
<dbReference type="PDB" id="7PIA">
    <property type="method" value="EM"/>
    <property type="resolution" value="13.60 A"/>
    <property type="chains" value="0=1-48"/>
</dbReference>
<dbReference type="PDB" id="7PIB">
    <property type="method" value="EM"/>
    <property type="resolution" value="4.70 A"/>
    <property type="chains" value="0=1-48"/>
</dbReference>
<dbReference type="PDB" id="7PIC">
    <property type="method" value="EM"/>
    <property type="resolution" value="9.10 A"/>
    <property type="chains" value="0=1-48"/>
</dbReference>
<dbReference type="PDB" id="7PIO">
    <property type="method" value="EM"/>
    <property type="resolution" value="9.50 A"/>
    <property type="chains" value="0=1-48"/>
</dbReference>
<dbReference type="PDB" id="7PIP">
    <property type="method" value="EM"/>
    <property type="resolution" value="9.30 A"/>
    <property type="chains" value="0=1-48"/>
</dbReference>
<dbReference type="PDB" id="7PIQ">
    <property type="method" value="EM"/>
    <property type="resolution" value="9.70 A"/>
    <property type="chains" value="0=1-48"/>
</dbReference>
<dbReference type="PDB" id="7PIR">
    <property type="method" value="EM"/>
    <property type="resolution" value="12.10 A"/>
    <property type="chains" value="0=1-48"/>
</dbReference>
<dbReference type="PDB" id="7PIS">
    <property type="method" value="EM"/>
    <property type="resolution" value="15.00 A"/>
    <property type="chains" value="0=1-48"/>
</dbReference>
<dbReference type="PDB" id="7PIT">
    <property type="method" value="EM"/>
    <property type="resolution" value="5.70 A"/>
    <property type="chains" value="0=1-48"/>
</dbReference>
<dbReference type="PDB" id="8P7X">
    <property type="method" value="EM"/>
    <property type="resolution" value="3.03 A"/>
    <property type="chains" value="0=1-48"/>
</dbReference>
<dbReference type="PDB" id="8P7Y">
    <property type="method" value="EM"/>
    <property type="resolution" value="3.70 A"/>
    <property type="chains" value="0=1-48"/>
</dbReference>
<dbReference type="PDB" id="8P8B">
    <property type="method" value="EM"/>
    <property type="resolution" value="2.90 A"/>
    <property type="chains" value="0=1-48"/>
</dbReference>
<dbReference type="PDB" id="8P8V">
    <property type="method" value="EM"/>
    <property type="resolution" value="8.70 A"/>
    <property type="chains" value="0=1-48"/>
</dbReference>
<dbReference type="PDB" id="8P8W">
    <property type="method" value="EM"/>
    <property type="resolution" value="8.70 A"/>
    <property type="chains" value="0=1-48"/>
</dbReference>
<dbReference type="PDBsum" id="7OOD"/>
<dbReference type="PDBsum" id="7P6Z"/>
<dbReference type="PDBsum" id="7PAH"/>
<dbReference type="PDBsum" id="7PAI"/>
<dbReference type="PDBsum" id="7PAJ"/>
<dbReference type="PDBsum" id="7PAK"/>
<dbReference type="PDBsum" id="7PAL"/>
<dbReference type="PDBsum" id="7PAM"/>
<dbReference type="PDBsum" id="7PAN"/>
<dbReference type="PDBsum" id="7PAO"/>
<dbReference type="PDBsum" id="7PAQ"/>
<dbReference type="PDBsum" id="7PAR"/>
<dbReference type="PDBsum" id="7PAS"/>
<dbReference type="PDBsum" id="7PAT"/>
<dbReference type="PDBsum" id="7PAU"/>
<dbReference type="PDBsum" id="7PH9"/>
<dbReference type="PDBsum" id="7PHA"/>
<dbReference type="PDBsum" id="7PHB"/>
<dbReference type="PDBsum" id="7PHC"/>
<dbReference type="PDBsum" id="7PI8"/>
<dbReference type="PDBsum" id="7PI9"/>
<dbReference type="PDBsum" id="7PIA"/>
<dbReference type="PDBsum" id="7PIB"/>
<dbReference type="PDBsum" id="7PIC"/>
<dbReference type="PDBsum" id="7PIO"/>
<dbReference type="PDBsum" id="7PIP"/>
<dbReference type="PDBsum" id="7PIQ"/>
<dbReference type="PDBsum" id="7PIR"/>
<dbReference type="PDBsum" id="7PIS"/>
<dbReference type="PDBsum" id="7PIT"/>
<dbReference type="PDBsum" id="8P7X"/>
<dbReference type="PDBsum" id="8P7Y"/>
<dbReference type="PDBsum" id="8P8B"/>
<dbReference type="PDBsum" id="8P8V"/>
<dbReference type="PDBsum" id="8P8W"/>
<dbReference type="EMDB" id="EMD-13234"/>
<dbReference type="EMDB" id="EMD-13272"/>
<dbReference type="EMDB" id="EMD-13273"/>
<dbReference type="EMDB" id="EMD-13274"/>
<dbReference type="EMDB" id="EMD-13275"/>
<dbReference type="EMDB" id="EMD-13276"/>
<dbReference type="EMDB" id="EMD-13277"/>
<dbReference type="EMDB" id="EMD-13278"/>
<dbReference type="EMDB" id="EMD-13279"/>
<dbReference type="EMDB" id="EMD-13280"/>
<dbReference type="EMDB" id="EMD-13281"/>
<dbReference type="EMDB" id="EMD-13282"/>
<dbReference type="EMDB" id="EMD-13285"/>
<dbReference type="EMDB" id="EMD-13286"/>
<dbReference type="EMDB" id="EMD-13410"/>
<dbReference type="EMDB" id="EMD-13411"/>
<dbReference type="EMDB" id="EMD-13412"/>
<dbReference type="EMDB" id="EMD-13413"/>
<dbReference type="EMDB" id="EMD-13432"/>
<dbReference type="EMDB" id="EMD-13433"/>
<dbReference type="EMDB" id="EMD-13434"/>
<dbReference type="EMDB" id="EMD-13435"/>
<dbReference type="EMDB" id="EMD-13436"/>
<dbReference type="EMDB" id="EMD-13445"/>
<dbReference type="EMDB" id="EMD-13446"/>
<dbReference type="EMDB" id="EMD-13447"/>
<dbReference type="EMDB" id="EMD-13448"/>
<dbReference type="EMDB" id="EMD-13449"/>
<dbReference type="EMDB" id="EMD-13450"/>
<dbReference type="SMR" id="P78006"/>
<dbReference type="STRING" id="272634.MPN_682"/>
<dbReference type="EnsemblBacteria" id="AAB95808">
    <property type="protein sequence ID" value="AAB95808"/>
    <property type="gene ID" value="MPN_682"/>
</dbReference>
<dbReference type="GeneID" id="66608630"/>
<dbReference type="KEGG" id="mpn:MPN_682"/>
<dbReference type="PATRIC" id="fig|272634.6.peg.749"/>
<dbReference type="HOGENOM" id="CLU_129938_2_0_14"/>
<dbReference type="BioCyc" id="MPNE272634:G1GJ3-1091-MONOMER"/>
<dbReference type="Proteomes" id="UP000000808">
    <property type="component" value="Chromosome"/>
</dbReference>
<dbReference type="GO" id="GO:1990904">
    <property type="term" value="C:ribonucleoprotein complex"/>
    <property type="evidence" value="ECO:0007669"/>
    <property type="project" value="UniProtKB-KW"/>
</dbReference>
<dbReference type="GO" id="GO:0005840">
    <property type="term" value="C:ribosome"/>
    <property type="evidence" value="ECO:0007669"/>
    <property type="project" value="UniProtKB-KW"/>
</dbReference>
<dbReference type="GO" id="GO:0003735">
    <property type="term" value="F:structural constituent of ribosome"/>
    <property type="evidence" value="ECO:0007669"/>
    <property type="project" value="InterPro"/>
</dbReference>
<dbReference type="GO" id="GO:0006412">
    <property type="term" value="P:translation"/>
    <property type="evidence" value="ECO:0007669"/>
    <property type="project" value="UniProtKB-UniRule"/>
</dbReference>
<dbReference type="FunFam" id="1.10.287.3980:FF:000001">
    <property type="entry name" value="Mitochondrial ribosomal protein L34"/>
    <property type="match status" value="1"/>
</dbReference>
<dbReference type="Gene3D" id="1.10.287.3980">
    <property type="match status" value="1"/>
</dbReference>
<dbReference type="HAMAP" id="MF_00391">
    <property type="entry name" value="Ribosomal_bL34"/>
    <property type="match status" value="1"/>
</dbReference>
<dbReference type="InterPro" id="IPR000271">
    <property type="entry name" value="Ribosomal_bL34"/>
</dbReference>
<dbReference type="InterPro" id="IPR020939">
    <property type="entry name" value="Ribosomal_bL34_CS"/>
</dbReference>
<dbReference type="NCBIfam" id="TIGR01030">
    <property type="entry name" value="rpmH_bact"/>
    <property type="match status" value="1"/>
</dbReference>
<dbReference type="PANTHER" id="PTHR14503:SF4">
    <property type="entry name" value="LARGE RIBOSOMAL SUBUNIT PROTEIN BL34M"/>
    <property type="match status" value="1"/>
</dbReference>
<dbReference type="PANTHER" id="PTHR14503">
    <property type="entry name" value="MITOCHONDRIAL RIBOSOMAL PROTEIN 34 FAMILY MEMBER"/>
    <property type="match status" value="1"/>
</dbReference>
<dbReference type="Pfam" id="PF00468">
    <property type="entry name" value="Ribosomal_L34"/>
    <property type="match status" value="1"/>
</dbReference>
<dbReference type="PROSITE" id="PS00784">
    <property type="entry name" value="RIBOSOMAL_L34"/>
    <property type="match status" value="1"/>
</dbReference>
<comment type="similarity">
    <text evidence="1">Belongs to the bacterial ribosomal protein bL34 family.</text>
</comment>
<feature type="chain" id="PRO_0000187416" description="Large ribosomal subunit protein bL34">
    <location>
        <begin position="1"/>
        <end position="48"/>
    </location>
</feature>
<feature type="helix" evidence="3">
    <location>
        <begin position="9"/>
        <end position="16"/>
    </location>
</feature>
<feature type="helix" evidence="3">
    <location>
        <begin position="18"/>
        <end position="21"/>
    </location>
</feature>
<feature type="helix" evidence="3">
    <location>
        <begin position="25"/>
        <end position="36"/>
    </location>
</feature>
<feature type="strand" evidence="2">
    <location>
        <begin position="43"/>
        <end position="45"/>
    </location>
</feature>
<accession>P78006</accession>
<evidence type="ECO:0000305" key="1"/>
<evidence type="ECO:0007829" key="2">
    <source>
        <dbReference type="PDB" id="7OOD"/>
    </source>
</evidence>
<evidence type="ECO:0007829" key="3">
    <source>
        <dbReference type="PDB" id="8P8B"/>
    </source>
</evidence>
<organism>
    <name type="scientific">Mycoplasma pneumoniae (strain ATCC 29342 / M129 / Subtype 1)</name>
    <name type="common">Mycoplasmoides pneumoniae</name>
    <dbReference type="NCBI Taxonomy" id="272634"/>
    <lineage>
        <taxon>Bacteria</taxon>
        <taxon>Bacillati</taxon>
        <taxon>Mycoplasmatota</taxon>
        <taxon>Mycoplasmoidales</taxon>
        <taxon>Mycoplasmoidaceae</taxon>
        <taxon>Mycoplasmoides</taxon>
    </lineage>
</organism>
<gene>
    <name type="primary">rpmH</name>
    <name type="ordered locus">MPN_682</name>
    <name type="ORF">MP160</name>
</gene>
<keyword id="KW-0002">3D-structure</keyword>
<keyword id="KW-1185">Reference proteome</keyword>
<keyword id="KW-0687">Ribonucleoprotein</keyword>
<keyword id="KW-0689">Ribosomal protein</keyword>
<proteinExistence type="evidence at protein level"/>
<reference key="1">
    <citation type="journal article" date="1996" name="Nucleic Acids Res.">
        <title>Complete sequence analysis of the genome of the bacterium Mycoplasma pneumoniae.</title>
        <authorList>
            <person name="Himmelreich R."/>
            <person name="Hilbert H."/>
            <person name="Plagens H."/>
            <person name="Pirkl E."/>
            <person name="Li B.-C."/>
            <person name="Herrmann R."/>
        </authorList>
    </citation>
    <scope>NUCLEOTIDE SEQUENCE [LARGE SCALE GENOMIC DNA]</scope>
    <source>
        <strain>ATCC 29342 / M129 / Subtype 1</strain>
    </source>
</reference>
<name>RL34_MYCPN</name>